<feature type="chain" id="PRO_1000145389" description="Peptide methionine sulfoxide reductase MsrA">
    <location>
        <begin position="1"/>
        <end position="173"/>
    </location>
</feature>
<feature type="active site" evidence="1">
    <location>
        <position position="10"/>
    </location>
</feature>
<gene>
    <name evidence="1" type="primary">msrA</name>
    <name type="ordered locus">AB57_0538</name>
</gene>
<keyword id="KW-0560">Oxidoreductase</keyword>
<organism>
    <name type="scientific">Acinetobacter baumannii (strain AB0057)</name>
    <dbReference type="NCBI Taxonomy" id="480119"/>
    <lineage>
        <taxon>Bacteria</taxon>
        <taxon>Pseudomonadati</taxon>
        <taxon>Pseudomonadota</taxon>
        <taxon>Gammaproteobacteria</taxon>
        <taxon>Moraxellales</taxon>
        <taxon>Moraxellaceae</taxon>
        <taxon>Acinetobacter</taxon>
        <taxon>Acinetobacter calcoaceticus/baumannii complex</taxon>
    </lineage>
</organism>
<reference key="1">
    <citation type="journal article" date="2008" name="J. Bacteriol.">
        <title>Comparative genome sequence analysis of multidrug-resistant Acinetobacter baumannii.</title>
        <authorList>
            <person name="Adams M.D."/>
            <person name="Goglin K."/>
            <person name="Molyneaux N."/>
            <person name="Hujer K.M."/>
            <person name="Lavender H."/>
            <person name="Jamison J.J."/>
            <person name="MacDonald I.J."/>
            <person name="Martin K.M."/>
            <person name="Russo T."/>
            <person name="Campagnari A.A."/>
            <person name="Hujer A.M."/>
            <person name="Bonomo R.A."/>
            <person name="Gill S.R."/>
        </authorList>
    </citation>
    <scope>NUCLEOTIDE SEQUENCE [LARGE SCALE GENOMIC DNA]</scope>
    <source>
        <strain>AB0057</strain>
    </source>
</reference>
<dbReference type="EC" id="1.8.4.11" evidence="1"/>
<dbReference type="EMBL" id="CP001182">
    <property type="protein sequence ID" value="ACJ39959.1"/>
    <property type="molecule type" value="Genomic_DNA"/>
</dbReference>
<dbReference type="RefSeq" id="WP_001183413.1">
    <property type="nucleotide sequence ID" value="NC_011586.2"/>
</dbReference>
<dbReference type="SMR" id="B7I4T7"/>
<dbReference type="GeneID" id="92892449"/>
<dbReference type="KEGG" id="abn:AB57_0538"/>
<dbReference type="HOGENOM" id="CLU_031040_10_0_6"/>
<dbReference type="Proteomes" id="UP000007094">
    <property type="component" value="Chromosome"/>
</dbReference>
<dbReference type="GO" id="GO:0033744">
    <property type="term" value="F:L-methionine:thioredoxin-disulfide S-oxidoreductase activity"/>
    <property type="evidence" value="ECO:0007669"/>
    <property type="project" value="RHEA"/>
</dbReference>
<dbReference type="GO" id="GO:0008113">
    <property type="term" value="F:peptide-methionine (S)-S-oxide reductase activity"/>
    <property type="evidence" value="ECO:0007669"/>
    <property type="project" value="UniProtKB-UniRule"/>
</dbReference>
<dbReference type="GO" id="GO:0036211">
    <property type="term" value="P:protein modification process"/>
    <property type="evidence" value="ECO:0007669"/>
    <property type="project" value="UniProtKB-UniRule"/>
</dbReference>
<dbReference type="Gene3D" id="3.30.1060.10">
    <property type="entry name" value="Peptide methionine sulphoxide reductase MsrA"/>
    <property type="match status" value="1"/>
</dbReference>
<dbReference type="HAMAP" id="MF_01401">
    <property type="entry name" value="MsrA"/>
    <property type="match status" value="1"/>
</dbReference>
<dbReference type="InterPro" id="IPR002569">
    <property type="entry name" value="Met_Sox_Rdtase_MsrA_dom"/>
</dbReference>
<dbReference type="InterPro" id="IPR036509">
    <property type="entry name" value="Met_Sox_Rdtase_MsrA_sf"/>
</dbReference>
<dbReference type="NCBIfam" id="TIGR00401">
    <property type="entry name" value="msrA"/>
    <property type="match status" value="1"/>
</dbReference>
<dbReference type="PANTHER" id="PTHR43774">
    <property type="entry name" value="PEPTIDE METHIONINE SULFOXIDE REDUCTASE"/>
    <property type="match status" value="1"/>
</dbReference>
<dbReference type="PANTHER" id="PTHR43774:SF1">
    <property type="entry name" value="PEPTIDE METHIONINE SULFOXIDE REDUCTASE MSRA 2"/>
    <property type="match status" value="1"/>
</dbReference>
<dbReference type="Pfam" id="PF01625">
    <property type="entry name" value="PMSR"/>
    <property type="match status" value="1"/>
</dbReference>
<dbReference type="SUPFAM" id="SSF55068">
    <property type="entry name" value="Peptide methionine sulfoxide reductase"/>
    <property type="match status" value="1"/>
</dbReference>
<name>MSRA_ACIB5</name>
<accession>B7I4T7</accession>
<protein>
    <recommendedName>
        <fullName evidence="1">Peptide methionine sulfoxide reductase MsrA</fullName>
        <shortName evidence="1">Protein-methionine-S-oxide reductase</shortName>
        <ecNumber evidence="1">1.8.4.11</ecNumber>
    </recommendedName>
    <alternativeName>
        <fullName evidence="1">Peptide-methionine (S)-S-oxide reductase</fullName>
        <shortName evidence="1">Peptide Met(O) reductase</shortName>
    </alternativeName>
</protein>
<comment type="function">
    <text evidence="1">Has an important function as a repair enzyme for proteins that have been inactivated by oxidation. Catalyzes the reversible oxidation-reduction of methionine sulfoxide in proteins to methionine.</text>
</comment>
<comment type="catalytic activity">
    <reaction evidence="1">
        <text>L-methionyl-[protein] + [thioredoxin]-disulfide + H2O = L-methionyl-(S)-S-oxide-[protein] + [thioredoxin]-dithiol</text>
        <dbReference type="Rhea" id="RHEA:14217"/>
        <dbReference type="Rhea" id="RHEA-COMP:10698"/>
        <dbReference type="Rhea" id="RHEA-COMP:10700"/>
        <dbReference type="Rhea" id="RHEA-COMP:12313"/>
        <dbReference type="Rhea" id="RHEA-COMP:12315"/>
        <dbReference type="ChEBI" id="CHEBI:15377"/>
        <dbReference type="ChEBI" id="CHEBI:16044"/>
        <dbReference type="ChEBI" id="CHEBI:29950"/>
        <dbReference type="ChEBI" id="CHEBI:44120"/>
        <dbReference type="ChEBI" id="CHEBI:50058"/>
        <dbReference type="EC" id="1.8.4.11"/>
    </reaction>
</comment>
<comment type="catalytic activity">
    <reaction evidence="1">
        <text>[thioredoxin]-disulfide + L-methionine + H2O = L-methionine (S)-S-oxide + [thioredoxin]-dithiol</text>
        <dbReference type="Rhea" id="RHEA:19993"/>
        <dbReference type="Rhea" id="RHEA-COMP:10698"/>
        <dbReference type="Rhea" id="RHEA-COMP:10700"/>
        <dbReference type="ChEBI" id="CHEBI:15377"/>
        <dbReference type="ChEBI" id="CHEBI:29950"/>
        <dbReference type="ChEBI" id="CHEBI:50058"/>
        <dbReference type="ChEBI" id="CHEBI:57844"/>
        <dbReference type="ChEBI" id="CHEBI:58772"/>
        <dbReference type="EC" id="1.8.4.11"/>
    </reaction>
</comment>
<comment type="similarity">
    <text evidence="1">Belongs to the MsrA Met sulfoxide reductase family.</text>
</comment>
<proteinExistence type="inferred from homology"/>
<sequence>MQQALFGGGCFWCVEAVFLQIRGVEKVTSGYAGGHTTHPTYEQVCQGDTQHAEVVLIDFDEQQVTYSQLLDVFFATHDPTTLNRQGNDIGTQYRSVIYYFNEEQKQAAEHTIQTLKDDDLDIVTELSPAPTFYPAEDYHQNYYEKNPSQGYCNFAIPPKLLKLHSKFQHLMKN</sequence>
<evidence type="ECO:0000255" key="1">
    <source>
        <dbReference type="HAMAP-Rule" id="MF_01401"/>
    </source>
</evidence>